<reference key="1">
    <citation type="journal article" date="2007" name="PLoS Genet.">
        <title>The complete genome sequence of Yersinia pseudotuberculosis IP31758, the causative agent of Far East scarlet-like fever.</title>
        <authorList>
            <person name="Eppinger M."/>
            <person name="Rosovitz M.J."/>
            <person name="Fricke W.F."/>
            <person name="Rasko D.A."/>
            <person name="Kokorina G."/>
            <person name="Fayolle C."/>
            <person name="Lindler L.E."/>
            <person name="Carniel E."/>
            <person name="Ravel J."/>
        </authorList>
    </citation>
    <scope>NUCLEOTIDE SEQUENCE [LARGE SCALE GENOMIC DNA]</scope>
    <source>
        <strain>IP 31758</strain>
    </source>
</reference>
<accession>A7FDV0</accession>
<organism>
    <name type="scientific">Yersinia pseudotuberculosis serotype O:1b (strain IP 31758)</name>
    <dbReference type="NCBI Taxonomy" id="349747"/>
    <lineage>
        <taxon>Bacteria</taxon>
        <taxon>Pseudomonadati</taxon>
        <taxon>Pseudomonadota</taxon>
        <taxon>Gammaproteobacteria</taxon>
        <taxon>Enterobacterales</taxon>
        <taxon>Yersiniaceae</taxon>
        <taxon>Yersinia</taxon>
    </lineage>
</organism>
<dbReference type="EMBL" id="CP000720">
    <property type="protein sequence ID" value="ABS48021.1"/>
    <property type="molecule type" value="Genomic_DNA"/>
</dbReference>
<dbReference type="RefSeq" id="WP_012104412.1">
    <property type="nucleotide sequence ID" value="NC_009708.1"/>
</dbReference>
<dbReference type="SMR" id="A7FDV0"/>
<dbReference type="GeneID" id="96663022"/>
<dbReference type="KEGG" id="ypi:YpsIP31758_0435"/>
<dbReference type="HOGENOM" id="CLU_128576_0_0_6"/>
<dbReference type="Proteomes" id="UP000002412">
    <property type="component" value="Chromosome"/>
</dbReference>
<dbReference type="GO" id="GO:0009347">
    <property type="term" value="C:aspartate carbamoyltransferase complex"/>
    <property type="evidence" value="ECO:0007669"/>
    <property type="project" value="InterPro"/>
</dbReference>
<dbReference type="GO" id="GO:0046872">
    <property type="term" value="F:metal ion binding"/>
    <property type="evidence" value="ECO:0007669"/>
    <property type="project" value="UniProtKB-KW"/>
</dbReference>
<dbReference type="GO" id="GO:0006207">
    <property type="term" value="P:'de novo' pyrimidine nucleobase biosynthetic process"/>
    <property type="evidence" value="ECO:0007669"/>
    <property type="project" value="InterPro"/>
</dbReference>
<dbReference type="GO" id="GO:0006221">
    <property type="term" value="P:pyrimidine nucleotide biosynthetic process"/>
    <property type="evidence" value="ECO:0007669"/>
    <property type="project" value="UniProtKB-UniRule"/>
</dbReference>
<dbReference type="FunFam" id="3.30.70.140:FF:000001">
    <property type="entry name" value="Aspartate carbamoyltransferase regulatory chain"/>
    <property type="match status" value="1"/>
</dbReference>
<dbReference type="Gene3D" id="2.30.30.20">
    <property type="entry name" value="Aspartate carbamoyltransferase regulatory subunit, C-terminal domain"/>
    <property type="match status" value="1"/>
</dbReference>
<dbReference type="Gene3D" id="3.30.70.140">
    <property type="entry name" value="Aspartate carbamoyltransferase regulatory subunit, N-terminal domain"/>
    <property type="match status" value="1"/>
</dbReference>
<dbReference type="HAMAP" id="MF_00002">
    <property type="entry name" value="Asp_carb_tr_reg"/>
    <property type="match status" value="1"/>
</dbReference>
<dbReference type="InterPro" id="IPR020545">
    <property type="entry name" value="Asp_carbamoyltransf_reg_N"/>
</dbReference>
<dbReference type="InterPro" id="IPR002801">
    <property type="entry name" value="Asp_carbamoylTrfase_reg"/>
</dbReference>
<dbReference type="InterPro" id="IPR020542">
    <property type="entry name" value="Asp_carbamoyltrfase_reg_C"/>
</dbReference>
<dbReference type="InterPro" id="IPR036792">
    <property type="entry name" value="Asp_carbatrfase_reg_C_sf"/>
</dbReference>
<dbReference type="InterPro" id="IPR036793">
    <property type="entry name" value="Asp_carbatrfase_reg_N_sf"/>
</dbReference>
<dbReference type="NCBIfam" id="TIGR00240">
    <property type="entry name" value="ATCase_reg"/>
    <property type="match status" value="1"/>
</dbReference>
<dbReference type="PANTHER" id="PTHR35805">
    <property type="entry name" value="ASPARTATE CARBAMOYLTRANSFERASE REGULATORY CHAIN"/>
    <property type="match status" value="1"/>
</dbReference>
<dbReference type="PANTHER" id="PTHR35805:SF1">
    <property type="entry name" value="ASPARTATE CARBAMOYLTRANSFERASE REGULATORY CHAIN"/>
    <property type="match status" value="1"/>
</dbReference>
<dbReference type="Pfam" id="PF01948">
    <property type="entry name" value="PyrI"/>
    <property type="match status" value="1"/>
</dbReference>
<dbReference type="Pfam" id="PF02748">
    <property type="entry name" value="PyrI_C"/>
    <property type="match status" value="1"/>
</dbReference>
<dbReference type="SUPFAM" id="SSF57825">
    <property type="entry name" value="Aspartate carbamoyltransferase, Regulatory-chain, C-terminal domain"/>
    <property type="match status" value="1"/>
</dbReference>
<dbReference type="SUPFAM" id="SSF54893">
    <property type="entry name" value="Aspartate carbamoyltransferase, Regulatory-chain, N-terminal domain"/>
    <property type="match status" value="1"/>
</dbReference>
<protein>
    <recommendedName>
        <fullName evidence="1">Aspartate carbamoyltransferase regulatory chain</fullName>
    </recommendedName>
</protein>
<comment type="function">
    <text evidence="1">Involved in allosteric regulation of aspartate carbamoyltransferase.</text>
</comment>
<comment type="cofactor">
    <cofactor evidence="1">
        <name>Zn(2+)</name>
        <dbReference type="ChEBI" id="CHEBI:29105"/>
    </cofactor>
    <text evidence="1">Binds 1 zinc ion per subunit.</text>
</comment>
<comment type="subunit">
    <text evidence="1">Contains catalytic and regulatory chains.</text>
</comment>
<comment type="similarity">
    <text evidence="1">Belongs to the PyrI family.</text>
</comment>
<sequence>MTQDYKLQVEAIKCGTVIDHIPAQIGFKLLSLFKLTATDQRITIGLNLPSKRSGRKDLIKIENTFLTEQQANQLAMYAPDATVNRIDNYEVVKKLTLSLPERIDAVLTCPNSNCISHNEPVDSSFTVKAQRGEISLKCKYCEKEFDHLAVLHAD</sequence>
<feature type="chain" id="PRO_1000057017" description="Aspartate carbamoyltransferase regulatory chain">
    <location>
        <begin position="1"/>
        <end position="154"/>
    </location>
</feature>
<feature type="binding site" evidence="1">
    <location>
        <position position="109"/>
    </location>
    <ligand>
        <name>Zn(2+)</name>
        <dbReference type="ChEBI" id="CHEBI:29105"/>
    </ligand>
</feature>
<feature type="binding site" evidence="1">
    <location>
        <position position="114"/>
    </location>
    <ligand>
        <name>Zn(2+)</name>
        <dbReference type="ChEBI" id="CHEBI:29105"/>
    </ligand>
</feature>
<feature type="binding site" evidence="1">
    <location>
        <position position="138"/>
    </location>
    <ligand>
        <name>Zn(2+)</name>
        <dbReference type="ChEBI" id="CHEBI:29105"/>
    </ligand>
</feature>
<feature type="binding site" evidence="1">
    <location>
        <position position="141"/>
    </location>
    <ligand>
        <name>Zn(2+)</name>
        <dbReference type="ChEBI" id="CHEBI:29105"/>
    </ligand>
</feature>
<evidence type="ECO:0000255" key="1">
    <source>
        <dbReference type="HAMAP-Rule" id="MF_00002"/>
    </source>
</evidence>
<name>PYRI_YERP3</name>
<keyword id="KW-0479">Metal-binding</keyword>
<keyword id="KW-0665">Pyrimidine biosynthesis</keyword>
<keyword id="KW-0862">Zinc</keyword>
<gene>
    <name evidence="1" type="primary">pyrI</name>
    <name type="ordered locus">YpsIP31758_0435</name>
</gene>
<proteinExistence type="inferred from homology"/>